<gene>
    <name evidence="4" type="primary">nat</name>
    <name evidence="3" type="synonym">nocC</name>
</gene>
<protein>
    <recommendedName>
        <fullName evidence="5">Isonocardicin synthase</fullName>
        <ecNumber evidence="2">2.5.1.38</ecNumber>
    </recommendedName>
    <alternativeName>
        <fullName evidence="4">Nocardicin 3-amino-3-carboxypropyltransferase</fullName>
    </alternativeName>
</protein>
<keyword id="KW-0045">Antibiotic biosynthesis</keyword>
<keyword id="KW-0903">Direct protein sequencing</keyword>
<keyword id="KW-0808">Transferase</keyword>
<sequence length="301" mass="32418">MTALSRVSGQAPDRVVETYAEGKPYDLFFLDVAGVRLVGRKTEAAYPGPDRDGLPAERLKCALVEARMLLGVVERDQVAEDHVAVFHRPLGEAEKAELFAAAVADPTTDLYYPYAQLGDRVRETEEGGWEVTDESARELDHAEEVLRDHVPDRLAELGFRGGVAYDAACSTGAFLQAVGRRFPGTRTIGQDLSPAMVARARTRLDEAHCGDGIRPAIPEASADLVVCRHLNAFVVGTGQAHDLLAAAASRCREGGLVVLLGHTPVLVSSQWCEMSGLTPLQRSGATPSGHALFQCYVLRKG</sequence>
<accession>Q9RAH6</accession>
<comment type="function">
    <text evidence="2">Involved in the biosynthesis of the beta-lactam antibiotic nocardicin A (PubMed:9804844). In the presence of S-adenosyl-L-methionine (AdoMet), catalyzes the transfer of a 3-amino-3-carboxypropyl group from AdoMet to nocardicin G, forming isonocardicin C (PubMed:9804844). Can also catalyze the transformation of nocardicin E and F to isonocardicin A and B, respectively, but in vivo substrate is probably nocardicin G (PubMed:9804844).</text>
</comment>
<comment type="catalytic activity">
    <reaction evidence="2">
        <text>nocardicin G + S-adenosyl-L-methionine = isonocardicin C + S-methyl-5'-thioadenosine + H(+)</text>
        <dbReference type="Rhea" id="RHEA:49708"/>
        <dbReference type="ChEBI" id="CHEBI:15378"/>
        <dbReference type="ChEBI" id="CHEBI:17509"/>
        <dbReference type="ChEBI" id="CHEBI:59789"/>
        <dbReference type="ChEBI" id="CHEBI:131919"/>
        <dbReference type="ChEBI" id="CHEBI:131920"/>
        <dbReference type="EC" id="2.5.1.38"/>
    </reaction>
    <physiologicalReaction direction="left-to-right" evidence="2">
        <dbReference type="Rhea" id="RHEA:49709"/>
    </physiologicalReaction>
</comment>
<comment type="catalytic activity">
    <reaction evidence="2">
        <text>nocardicin E + S-adenosyl-L-methionine = isonocardicin A + S-methyl-5'-thioadenosine + H(+)</text>
        <dbReference type="Rhea" id="RHEA:19845"/>
        <dbReference type="ChEBI" id="CHEBI:15378"/>
        <dbReference type="ChEBI" id="CHEBI:17509"/>
        <dbReference type="ChEBI" id="CHEBI:59789"/>
        <dbReference type="ChEBI" id="CHEBI:77633"/>
        <dbReference type="ChEBI" id="CHEBI:77885"/>
        <dbReference type="EC" id="2.5.1.38"/>
    </reaction>
</comment>
<comment type="biophysicochemical properties">
    <kinetics>
        <KM evidence="2">330 uM for S-adenosyl-L-methionine</KM>
        <KM evidence="2">3.7 uM for nocardicin G</KM>
        <KM evidence="2">4.2 uM for nocardicin F</KM>
        <KM evidence="2">14.4 uM for nocardicin E</KM>
    </kinetics>
</comment>
<comment type="pathway">
    <text evidence="2">Antibiotic biosynthesis.</text>
</comment>
<comment type="subunit">
    <text evidence="2">Monomer.</text>
</comment>
<comment type="disruption phenotype">
    <text evidence="1">Disruption of the gene results in complete loss of nocardicin A production.</text>
</comment>
<feature type="chain" id="PRO_0000456702" description="Isonocardicin synthase">
    <location>
        <begin position="1"/>
        <end position="301"/>
    </location>
</feature>
<evidence type="ECO:0000269" key="1">
    <source>
    </source>
</evidence>
<evidence type="ECO:0000269" key="2">
    <source>
    </source>
</evidence>
<evidence type="ECO:0000303" key="3">
    <source>
    </source>
</evidence>
<evidence type="ECO:0000303" key="4">
    <source>
    </source>
</evidence>
<evidence type="ECO:0000305" key="5"/>
<organism>
    <name type="scientific">Nocardia uniformis subsp. tsuyamanensis</name>
    <dbReference type="NCBI Taxonomy" id="96045"/>
    <lineage>
        <taxon>Bacteria</taxon>
        <taxon>Bacillati</taxon>
        <taxon>Actinomycetota</taxon>
        <taxon>Actinomycetes</taxon>
        <taxon>Mycobacteriales</taxon>
        <taxon>Nocardiaceae</taxon>
        <taxon>Nocardia</taxon>
    </lineage>
</organism>
<dbReference type="EC" id="2.5.1.38" evidence="2"/>
<dbReference type="EMBL" id="AY541063">
    <property type="protein sequence ID" value="AAD46393.1"/>
    <property type="molecule type" value="Genomic_DNA"/>
</dbReference>
<dbReference type="SMR" id="Q9RAH6"/>
<dbReference type="KEGG" id="ag:AAD46393"/>
<dbReference type="BioCyc" id="MetaCyc:MONOMER-13594"/>
<dbReference type="GO" id="GO:0016740">
    <property type="term" value="F:transferase activity"/>
    <property type="evidence" value="ECO:0007669"/>
    <property type="project" value="UniProtKB-KW"/>
</dbReference>
<dbReference type="GO" id="GO:0017000">
    <property type="term" value="P:antibiotic biosynthetic process"/>
    <property type="evidence" value="ECO:0007669"/>
    <property type="project" value="UniProtKB-KW"/>
</dbReference>
<dbReference type="CDD" id="cd02440">
    <property type="entry name" value="AdoMet_MTases"/>
    <property type="match status" value="1"/>
</dbReference>
<dbReference type="Gene3D" id="3.40.50.150">
    <property type="entry name" value="Vaccinia Virus protein VP39"/>
    <property type="match status" value="1"/>
</dbReference>
<dbReference type="InterPro" id="IPR041698">
    <property type="entry name" value="Methyltransf_25"/>
</dbReference>
<dbReference type="InterPro" id="IPR029063">
    <property type="entry name" value="SAM-dependent_MTases_sf"/>
</dbReference>
<dbReference type="Pfam" id="PF13649">
    <property type="entry name" value="Methyltransf_25"/>
    <property type="match status" value="1"/>
</dbReference>
<dbReference type="SUPFAM" id="SSF53335">
    <property type="entry name" value="S-adenosyl-L-methionine-dependent methyltransferases"/>
    <property type="match status" value="1"/>
</dbReference>
<proteinExistence type="evidence at protein level"/>
<name>NAT_NOCUT</name>
<reference key="1">
    <citation type="journal article" date="1998" name="J. Biol. Chem.">
        <title>Purification, characterization, and cloning of an S-adenosylmethionine-dependent 3-amino-3-carboxypropyltransferase in nocardicin biosynthesis.</title>
        <authorList>
            <person name="Reeve A.M."/>
            <person name="Breazeale S.D."/>
            <person name="Townsend C.A."/>
        </authorList>
    </citation>
    <scope>NUCLEOTIDE SEQUENCE [GENOMIC DNA]</scope>
    <scope>PROTEIN SEQUENCE OF 7-23 AND 42-60</scope>
    <scope>FUNCTION</scope>
    <scope>CATALYTIC ACTIVITY</scope>
    <scope>BIOPHYSICOCHEMICAL PROPERTIES</scope>
    <scope>PATHWAY</scope>
    <scope>SUBUNIT</scope>
    <source>
        <strain>ATCC 21806 / CECT 3282 / JCM 3279 / WS 1571</strain>
    </source>
</reference>
<reference key="2">
    <citation type="journal article" date="2004" name="Chem. Biol.">
        <title>The biosynthetic gene cluster for a monocyclic beta-lactam antibiotic, nocardicin A.</title>
        <authorList>
            <person name="Gunsior M."/>
            <person name="Breazeale S.D."/>
            <person name="Lind A.J."/>
            <person name="Ravel J."/>
            <person name="Janc J.W."/>
            <person name="Townsend C.A."/>
        </authorList>
    </citation>
    <scope>NUCLEOTIDE SEQUENCE [GENOMIC DNA]</scope>
    <scope>DISRUPTION PHENOTYPE</scope>
    <source>
        <strain>ATCC 21806 / CECT 3282 / JCM 3279 / WS 1571</strain>
    </source>
</reference>